<organism>
    <name type="scientific">Bacillus cereus (strain AH187)</name>
    <dbReference type="NCBI Taxonomy" id="405534"/>
    <lineage>
        <taxon>Bacteria</taxon>
        <taxon>Bacillati</taxon>
        <taxon>Bacillota</taxon>
        <taxon>Bacilli</taxon>
        <taxon>Bacillales</taxon>
        <taxon>Bacillaceae</taxon>
        <taxon>Bacillus</taxon>
        <taxon>Bacillus cereus group</taxon>
    </lineage>
</organism>
<feature type="chain" id="PRO_0000389673" description="Acetyl-coenzyme A carboxylase carboxyl transferase subunit beta">
    <location>
        <begin position="1"/>
        <end position="289"/>
    </location>
</feature>
<feature type="domain" description="CoA carboxyltransferase N-terminal" evidence="2">
    <location>
        <begin position="28"/>
        <end position="289"/>
    </location>
</feature>
<feature type="zinc finger region" description="C4-type" evidence="1">
    <location>
        <begin position="32"/>
        <end position="54"/>
    </location>
</feature>
<feature type="binding site" evidence="1">
    <location>
        <position position="32"/>
    </location>
    <ligand>
        <name>Zn(2+)</name>
        <dbReference type="ChEBI" id="CHEBI:29105"/>
    </ligand>
</feature>
<feature type="binding site" evidence="1">
    <location>
        <position position="35"/>
    </location>
    <ligand>
        <name>Zn(2+)</name>
        <dbReference type="ChEBI" id="CHEBI:29105"/>
    </ligand>
</feature>
<feature type="binding site" evidence="1">
    <location>
        <position position="51"/>
    </location>
    <ligand>
        <name>Zn(2+)</name>
        <dbReference type="ChEBI" id="CHEBI:29105"/>
    </ligand>
</feature>
<feature type="binding site" evidence="1">
    <location>
        <position position="54"/>
    </location>
    <ligand>
        <name>Zn(2+)</name>
        <dbReference type="ChEBI" id="CHEBI:29105"/>
    </ligand>
</feature>
<name>ACCD_BACC7</name>
<accession>B7HRP1</accession>
<comment type="function">
    <text evidence="1">Component of the acetyl coenzyme A carboxylase (ACC) complex. Biotin carboxylase (BC) catalyzes the carboxylation of biotin on its carrier protein (BCCP) and then the CO(2) group is transferred by the transcarboxylase to acetyl-CoA to form malonyl-CoA.</text>
</comment>
<comment type="catalytic activity">
    <reaction evidence="1">
        <text>N(6)-carboxybiotinyl-L-lysyl-[protein] + acetyl-CoA = N(6)-biotinyl-L-lysyl-[protein] + malonyl-CoA</text>
        <dbReference type="Rhea" id="RHEA:54728"/>
        <dbReference type="Rhea" id="RHEA-COMP:10505"/>
        <dbReference type="Rhea" id="RHEA-COMP:10506"/>
        <dbReference type="ChEBI" id="CHEBI:57288"/>
        <dbReference type="ChEBI" id="CHEBI:57384"/>
        <dbReference type="ChEBI" id="CHEBI:83144"/>
        <dbReference type="ChEBI" id="CHEBI:83145"/>
        <dbReference type="EC" id="2.1.3.15"/>
    </reaction>
</comment>
<comment type="cofactor">
    <cofactor evidence="1">
        <name>Zn(2+)</name>
        <dbReference type="ChEBI" id="CHEBI:29105"/>
    </cofactor>
    <text evidence="1">Binds 1 zinc ion per subunit.</text>
</comment>
<comment type="pathway">
    <text evidence="1">Lipid metabolism; malonyl-CoA biosynthesis; malonyl-CoA from acetyl-CoA: step 1/1.</text>
</comment>
<comment type="subunit">
    <text evidence="1">Acetyl-CoA carboxylase is a heterohexamer composed of biotin carboxyl carrier protein (AccB), biotin carboxylase (AccC) and two subunits each of ACCase subunit alpha (AccA) and ACCase subunit beta (AccD).</text>
</comment>
<comment type="subcellular location">
    <subcellularLocation>
        <location evidence="1">Cytoplasm</location>
    </subcellularLocation>
</comment>
<comment type="similarity">
    <text evidence="1">Belongs to the AccD/PCCB family.</text>
</comment>
<protein>
    <recommendedName>
        <fullName evidence="1">Acetyl-coenzyme A carboxylase carboxyl transferase subunit beta</fullName>
        <shortName evidence="1">ACCase subunit beta</shortName>
        <shortName evidence="1">Acetyl-CoA carboxylase carboxyltransferase subunit beta</shortName>
        <ecNumber evidence="1">2.1.3.15</ecNumber>
    </recommendedName>
</protein>
<sequence length="289" mass="32282">MLRDLFVKKKKYAAIPSEQVRKDVPDGVMTKCPKCKKIMYTKELLKNLKVCVNCGYHHPMNAWERLDSILDEGSFREYDKEMVSLNPLEFPDYEEKLESDRKKTDLNEAVVTGEGTIDDMLVVVAVMDSRFRMGSMGSVVGEKIARAVEKAYDLQVPFIIFTASGGARMQEGILSLMQMAKTSVALKKHSNAGGLFISVMTHPTTGGVSASFASLGDYNLAEPGALIGFAGRRVIEQTVREKLPEDFQTAEFLLEHGQLDAVVHRDDMRESLRKILEVHQGGEMAVWQS</sequence>
<gene>
    <name evidence="1" type="primary">accD</name>
    <name type="ordered locus">BCAH187_A4727</name>
</gene>
<dbReference type="EC" id="2.1.3.15" evidence="1"/>
<dbReference type="EMBL" id="CP001177">
    <property type="protein sequence ID" value="ACJ77716.1"/>
    <property type="molecule type" value="Genomic_DNA"/>
</dbReference>
<dbReference type="SMR" id="B7HRP1"/>
<dbReference type="KEGG" id="bcr:BCAH187_A4727"/>
<dbReference type="HOGENOM" id="CLU_015486_1_1_9"/>
<dbReference type="UniPathway" id="UPA00655">
    <property type="reaction ID" value="UER00711"/>
</dbReference>
<dbReference type="Proteomes" id="UP000002214">
    <property type="component" value="Chromosome"/>
</dbReference>
<dbReference type="GO" id="GO:0009317">
    <property type="term" value="C:acetyl-CoA carboxylase complex"/>
    <property type="evidence" value="ECO:0007669"/>
    <property type="project" value="InterPro"/>
</dbReference>
<dbReference type="GO" id="GO:0003989">
    <property type="term" value="F:acetyl-CoA carboxylase activity"/>
    <property type="evidence" value="ECO:0007669"/>
    <property type="project" value="InterPro"/>
</dbReference>
<dbReference type="GO" id="GO:0005524">
    <property type="term" value="F:ATP binding"/>
    <property type="evidence" value="ECO:0007669"/>
    <property type="project" value="UniProtKB-KW"/>
</dbReference>
<dbReference type="GO" id="GO:0016743">
    <property type="term" value="F:carboxyl- or carbamoyltransferase activity"/>
    <property type="evidence" value="ECO:0007669"/>
    <property type="project" value="UniProtKB-UniRule"/>
</dbReference>
<dbReference type="GO" id="GO:0008270">
    <property type="term" value="F:zinc ion binding"/>
    <property type="evidence" value="ECO:0007669"/>
    <property type="project" value="UniProtKB-UniRule"/>
</dbReference>
<dbReference type="GO" id="GO:0006633">
    <property type="term" value="P:fatty acid biosynthetic process"/>
    <property type="evidence" value="ECO:0007669"/>
    <property type="project" value="UniProtKB-KW"/>
</dbReference>
<dbReference type="GO" id="GO:2001295">
    <property type="term" value="P:malonyl-CoA biosynthetic process"/>
    <property type="evidence" value="ECO:0007669"/>
    <property type="project" value="UniProtKB-UniRule"/>
</dbReference>
<dbReference type="Gene3D" id="3.90.226.10">
    <property type="entry name" value="2-enoyl-CoA Hydratase, Chain A, domain 1"/>
    <property type="match status" value="1"/>
</dbReference>
<dbReference type="HAMAP" id="MF_01395">
    <property type="entry name" value="AcetylCoA_CT_beta"/>
    <property type="match status" value="1"/>
</dbReference>
<dbReference type="InterPro" id="IPR034733">
    <property type="entry name" value="AcCoA_carboxyl_beta"/>
</dbReference>
<dbReference type="InterPro" id="IPR000438">
    <property type="entry name" value="Acetyl_CoA_COase_Trfase_b_su"/>
</dbReference>
<dbReference type="InterPro" id="IPR029045">
    <property type="entry name" value="ClpP/crotonase-like_dom_sf"/>
</dbReference>
<dbReference type="InterPro" id="IPR011762">
    <property type="entry name" value="COA_CT_N"/>
</dbReference>
<dbReference type="InterPro" id="IPR041010">
    <property type="entry name" value="Znf-ACC"/>
</dbReference>
<dbReference type="NCBIfam" id="TIGR00515">
    <property type="entry name" value="accD"/>
    <property type="match status" value="1"/>
</dbReference>
<dbReference type="PANTHER" id="PTHR42995">
    <property type="entry name" value="ACETYL-COENZYME A CARBOXYLASE CARBOXYL TRANSFERASE SUBUNIT BETA, CHLOROPLASTIC"/>
    <property type="match status" value="1"/>
</dbReference>
<dbReference type="PANTHER" id="PTHR42995:SF5">
    <property type="entry name" value="ACETYL-COENZYME A CARBOXYLASE CARBOXYL TRANSFERASE SUBUNIT BETA, CHLOROPLASTIC"/>
    <property type="match status" value="1"/>
</dbReference>
<dbReference type="Pfam" id="PF01039">
    <property type="entry name" value="Carboxyl_trans"/>
    <property type="match status" value="1"/>
</dbReference>
<dbReference type="Pfam" id="PF17848">
    <property type="entry name" value="Zn_ribbon_ACC"/>
    <property type="match status" value="1"/>
</dbReference>
<dbReference type="PRINTS" id="PR01070">
    <property type="entry name" value="ACCCTRFRASEB"/>
</dbReference>
<dbReference type="SUPFAM" id="SSF52096">
    <property type="entry name" value="ClpP/crotonase"/>
    <property type="match status" value="1"/>
</dbReference>
<dbReference type="PROSITE" id="PS50980">
    <property type="entry name" value="COA_CT_NTER"/>
    <property type="match status" value="1"/>
</dbReference>
<evidence type="ECO:0000255" key="1">
    <source>
        <dbReference type="HAMAP-Rule" id="MF_01395"/>
    </source>
</evidence>
<evidence type="ECO:0000255" key="2">
    <source>
        <dbReference type="PROSITE-ProRule" id="PRU01136"/>
    </source>
</evidence>
<reference key="1">
    <citation type="submission" date="2008-10" db="EMBL/GenBank/DDBJ databases">
        <title>Genome sequence of Bacillus cereus AH187.</title>
        <authorList>
            <person name="Dodson R.J."/>
            <person name="Durkin A.S."/>
            <person name="Rosovitz M.J."/>
            <person name="Rasko D.A."/>
            <person name="Kolsto A.B."/>
            <person name="Okstad O.A."/>
            <person name="Ravel J."/>
            <person name="Sutton G."/>
        </authorList>
    </citation>
    <scope>NUCLEOTIDE SEQUENCE [LARGE SCALE GENOMIC DNA]</scope>
    <source>
        <strain>AH187</strain>
    </source>
</reference>
<proteinExistence type="inferred from homology"/>
<keyword id="KW-0067">ATP-binding</keyword>
<keyword id="KW-0963">Cytoplasm</keyword>
<keyword id="KW-0275">Fatty acid biosynthesis</keyword>
<keyword id="KW-0276">Fatty acid metabolism</keyword>
<keyword id="KW-0444">Lipid biosynthesis</keyword>
<keyword id="KW-0443">Lipid metabolism</keyword>
<keyword id="KW-0479">Metal-binding</keyword>
<keyword id="KW-0547">Nucleotide-binding</keyword>
<keyword id="KW-0808">Transferase</keyword>
<keyword id="KW-0862">Zinc</keyword>
<keyword id="KW-0863">Zinc-finger</keyword>